<keyword id="KW-0687">Ribonucleoprotein</keyword>
<keyword id="KW-0689">Ribosomal protein</keyword>
<sequence length="90" mass="10239">MATKIRLKRMGAKKAPFYRLVVADSRSPRDGRVVEEIGYYNPVKQPVEIKVDEEKALHWLTTGAQPSETVRALLKKAGVWQKYIAAREAK</sequence>
<proteinExistence type="inferred from homology"/>
<accession>Q2RJV7</accession>
<name>RS16_MOOTA</name>
<gene>
    <name evidence="1" type="primary">rpsP</name>
    <name type="ordered locus">Moth_0967</name>
</gene>
<dbReference type="EMBL" id="CP000232">
    <property type="protein sequence ID" value="ABC19282.1"/>
    <property type="molecule type" value="Genomic_DNA"/>
</dbReference>
<dbReference type="RefSeq" id="YP_429825.1">
    <property type="nucleotide sequence ID" value="NC_007644.1"/>
</dbReference>
<dbReference type="SMR" id="Q2RJV7"/>
<dbReference type="STRING" id="264732.Moth_0967"/>
<dbReference type="EnsemblBacteria" id="ABC19282">
    <property type="protein sequence ID" value="ABC19282"/>
    <property type="gene ID" value="Moth_0967"/>
</dbReference>
<dbReference type="KEGG" id="mta:Moth_0967"/>
<dbReference type="PATRIC" id="fig|264732.11.peg.1041"/>
<dbReference type="eggNOG" id="COG0228">
    <property type="taxonomic scope" value="Bacteria"/>
</dbReference>
<dbReference type="HOGENOM" id="CLU_100590_5_0_9"/>
<dbReference type="OrthoDB" id="9807878at2"/>
<dbReference type="GO" id="GO:0005737">
    <property type="term" value="C:cytoplasm"/>
    <property type="evidence" value="ECO:0007669"/>
    <property type="project" value="UniProtKB-ARBA"/>
</dbReference>
<dbReference type="GO" id="GO:0015935">
    <property type="term" value="C:small ribosomal subunit"/>
    <property type="evidence" value="ECO:0007669"/>
    <property type="project" value="TreeGrafter"/>
</dbReference>
<dbReference type="GO" id="GO:0003735">
    <property type="term" value="F:structural constituent of ribosome"/>
    <property type="evidence" value="ECO:0007669"/>
    <property type="project" value="InterPro"/>
</dbReference>
<dbReference type="GO" id="GO:0006412">
    <property type="term" value="P:translation"/>
    <property type="evidence" value="ECO:0007669"/>
    <property type="project" value="UniProtKB-UniRule"/>
</dbReference>
<dbReference type="FunFam" id="3.30.1320.10:FF:000002">
    <property type="entry name" value="30S ribosomal protein S16"/>
    <property type="match status" value="1"/>
</dbReference>
<dbReference type="Gene3D" id="3.30.1320.10">
    <property type="match status" value="1"/>
</dbReference>
<dbReference type="HAMAP" id="MF_00385">
    <property type="entry name" value="Ribosomal_bS16"/>
    <property type="match status" value="1"/>
</dbReference>
<dbReference type="InterPro" id="IPR000307">
    <property type="entry name" value="Ribosomal_bS16"/>
</dbReference>
<dbReference type="InterPro" id="IPR020592">
    <property type="entry name" value="Ribosomal_bS16_CS"/>
</dbReference>
<dbReference type="InterPro" id="IPR023803">
    <property type="entry name" value="Ribosomal_bS16_dom_sf"/>
</dbReference>
<dbReference type="NCBIfam" id="TIGR00002">
    <property type="entry name" value="S16"/>
    <property type="match status" value="1"/>
</dbReference>
<dbReference type="PANTHER" id="PTHR12919">
    <property type="entry name" value="30S RIBOSOMAL PROTEIN S16"/>
    <property type="match status" value="1"/>
</dbReference>
<dbReference type="PANTHER" id="PTHR12919:SF20">
    <property type="entry name" value="SMALL RIBOSOMAL SUBUNIT PROTEIN BS16M"/>
    <property type="match status" value="1"/>
</dbReference>
<dbReference type="Pfam" id="PF00886">
    <property type="entry name" value="Ribosomal_S16"/>
    <property type="match status" value="1"/>
</dbReference>
<dbReference type="SUPFAM" id="SSF54565">
    <property type="entry name" value="Ribosomal protein S16"/>
    <property type="match status" value="1"/>
</dbReference>
<dbReference type="PROSITE" id="PS00732">
    <property type="entry name" value="RIBOSOMAL_S16"/>
    <property type="match status" value="1"/>
</dbReference>
<feature type="chain" id="PRO_0000243826" description="Small ribosomal subunit protein bS16">
    <location>
        <begin position="1"/>
        <end position="90"/>
    </location>
</feature>
<comment type="similarity">
    <text evidence="1">Belongs to the bacterial ribosomal protein bS16 family.</text>
</comment>
<reference key="1">
    <citation type="journal article" date="2008" name="Environ. Microbiol.">
        <title>The complete genome sequence of Moorella thermoacetica (f. Clostridium thermoaceticum).</title>
        <authorList>
            <person name="Pierce E."/>
            <person name="Xie G."/>
            <person name="Barabote R.D."/>
            <person name="Saunders E."/>
            <person name="Han C.S."/>
            <person name="Detter J.C."/>
            <person name="Richardson P."/>
            <person name="Brettin T.S."/>
            <person name="Das A."/>
            <person name="Ljungdahl L.G."/>
            <person name="Ragsdale S.W."/>
        </authorList>
    </citation>
    <scope>NUCLEOTIDE SEQUENCE [LARGE SCALE GENOMIC DNA]</scope>
    <source>
        <strain>ATCC 39073 / JCM 9320</strain>
    </source>
</reference>
<evidence type="ECO:0000255" key="1">
    <source>
        <dbReference type="HAMAP-Rule" id="MF_00385"/>
    </source>
</evidence>
<evidence type="ECO:0000305" key="2"/>
<organism>
    <name type="scientific">Moorella thermoacetica (strain ATCC 39073 / JCM 9320)</name>
    <dbReference type="NCBI Taxonomy" id="264732"/>
    <lineage>
        <taxon>Bacteria</taxon>
        <taxon>Bacillati</taxon>
        <taxon>Bacillota</taxon>
        <taxon>Clostridia</taxon>
        <taxon>Moorellales</taxon>
        <taxon>Moorellaceae</taxon>
        <taxon>Moorella</taxon>
    </lineage>
</organism>
<protein>
    <recommendedName>
        <fullName evidence="1">Small ribosomal subunit protein bS16</fullName>
    </recommendedName>
    <alternativeName>
        <fullName evidence="2">30S ribosomal protein S16</fullName>
    </alternativeName>
</protein>